<evidence type="ECO:0000255" key="1">
    <source>
        <dbReference type="HAMAP-Rule" id="MF_00815"/>
    </source>
</evidence>
<dbReference type="EMBL" id="CP000828">
    <property type="protein sequence ID" value="ABW25939.1"/>
    <property type="molecule type" value="Genomic_DNA"/>
</dbReference>
<dbReference type="RefSeq" id="WP_010468100.1">
    <property type="nucleotide sequence ID" value="NC_009925.1"/>
</dbReference>
<dbReference type="SMR" id="B0BZL3"/>
<dbReference type="STRING" id="329726.AM1_0897"/>
<dbReference type="KEGG" id="amr:AM1_0897"/>
<dbReference type="eggNOG" id="COG0224">
    <property type="taxonomic scope" value="Bacteria"/>
</dbReference>
<dbReference type="HOGENOM" id="CLU_050669_0_0_3"/>
<dbReference type="OrthoDB" id="9812769at2"/>
<dbReference type="Proteomes" id="UP000000268">
    <property type="component" value="Chromosome"/>
</dbReference>
<dbReference type="GO" id="GO:0031676">
    <property type="term" value="C:plasma membrane-derived thylakoid membrane"/>
    <property type="evidence" value="ECO:0007669"/>
    <property type="project" value="UniProtKB-SubCell"/>
</dbReference>
<dbReference type="GO" id="GO:0045259">
    <property type="term" value="C:proton-transporting ATP synthase complex"/>
    <property type="evidence" value="ECO:0007669"/>
    <property type="project" value="UniProtKB-KW"/>
</dbReference>
<dbReference type="GO" id="GO:0005524">
    <property type="term" value="F:ATP binding"/>
    <property type="evidence" value="ECO:0007669"/>
    <property type="project" value="UniProtKB-UniRule"/>
</dbReference>
<dbReference type="GO" id="GO:0046933">
    <property type="term" value="F:proton-transporting ATP synthase activity, rotational mechanism"/>
    <property type="evidence" value="ECO:0007669"/>
    <property type="project" value="UniProtKB-UniRule"/>
</dbReference>
<dbReference type="CDD" id="cd12151">
    <property type="entry name" value="F1-ATPase_gamma"/>
    <property type="match status" value="1"/>
</dbReference>
<dbReference type="FunFam" id="3.40.1380.10:FF:000006">
    <property type="entry name" value="ATP synthase gamma chain"/>
    <property type="match status" value="1"/>
</dbReference>
<dbReference type="FunFam" id="1.10.287.80:FF:000003">
    <property type="entry name" value="ATP synthase gamma chain, chloroplastic"/>
    <property type="match status" value="1"/>
</dbReference>
<dbReference type="FunFam" id="1.10.287.80:FF:000004">
    <property type="entry name" value="ATP synthase gamma chain, chloroplastic"/>
    <property type="match status" value="1"/>
</dbReference>
<dbReference type="Gene3D" id="3.40.1380.10">
    <property type="match status" value="1"/>
</dbReference>
<dbReference type="Gene3D" id="1.10.287.80">
    <property type="entry name" value="ATP synthase, gamma subunit, helix hairpin domain"/>
    <property type="match status" value="2"/>
</dbReference>
<dbReference type="HAMAP" id="MF_00815">
    <property type="entry name" value="ATP_synth_gamma_bact"/>
    <property type="match status" value="1"/>
</dbReference>
<dbReference type="InterPro" id="IPR035968">
    <property type="entry name" value="ATP_synth_F1_ATPase_gsu"/>
</dbReference>
<dbReference type="InterPro" id="IPR000131">
    <property type="entry name" value="ATP_synth_F1_gsu"/>
</dbReference>
<dbReference type="InterPro" id="IPR023632">
    <property type="entry name" value="ATP_synth_F1_gsu_CS"/>
</dbReference>
<dbReference type="NCBIfam" id="TIGR01146">
    <property type="entry name" value="ATPsyn_F1gamma"/>
    <property type="match status" value="1"/>
</dbReference>
<dbReference type="NCBIfam" id="NF004145">
    <property type="entry name" value="PRK05621.1-2"/>
    <property type="match status" value="1"/>
</dbReference>
<dbReference type="PANTHER" id="PTHR11693">
    <property type="entry name" value="ATP SYNTHASE GAMMA CHAIN"/>
    <property type="match status" value="1"/>
</dbReference>
<dbReference type="PANTHER" id="PTHR11693:SF41">
    <property type="entry name" value="ATP SYNTHASE GAMMA CHAIN, CHLOROPLASTIC"/>
    <property type="match status" value="1"/>
</dbReference>
<dbReference type="Pfam" id="PF00231">
    <property type="entry name" value="ATP-synt"/>
    <property type="match status" value="1"/>
</dbReference>
<dbReference type="PRINTS" id="PR00126">
    <property type="entry name" value="ATPASEGAMMA"/>
</dbReference>
<dbReference type="SUPFAM" id="SSF52943">
    <property type="entry name" value="ATP synthase (F1-ATPase), gamma subunit"/>
    <property type="match status" value="1"/>
</dbReference>
<dbReference type="PROSITE" id="PS00153">
    <property type="entry name" value="ATPASE_GAMMA"/>
    <property type="match status" value="1"/>
</dbReference>
<sequence length="317" mass="35507">MPNLKSIRDRISTVKNTKKITEAMRLVAAAKVRRAQEQVTATRPFADRLAQVLYGLQARLKFEEVELPLLQERALRKVCLLVVTGDRGLCGAYNSSVIKRAEERSNELKAKGIDYTFVLVGRKAIQYFQRRDQPIEATYGGLEQIPTAQEASEIADELLSLYLSEEVDHVELIYTRFISLVNSRPVVQTLLPLDPDALVVAEEDEVFRLTTRGGQFQVERERMERGTPQEMPSDMIFEQNPIQILDALLPLYLNNQLLRALQESAASELAARMTAMNNASDNASELIGTLTLSYNKARQAAITQELLEVVGGAEALN</sequence>
<name>ATPG_ACAM1</name>
<protein>
    <recommendedName>
        <fullName evidence="1">ATP synthase gamma chain</fullName>
    </recommendedName>
    <alternativeName>
        <fullName evidence="1">ATP synthase F1 sector gamma subunit</fullName>
    </alternativeName>
    <alternativeName>
        <fullName evidence="1">F-ATPase gamma subunit</fullName>
    </alternativeName>
</protein>
<comment type="function">
    <text evidence="1">Produces ATP from ADP in the presence of a proton gradient across the membrane. The gamma chain is believed to be important in regulating ATPase activity and the flow of protons through the CF(0) complex.</text>
</comment>
<comment type="subunit">
    <text evidence="1">F-type ATPases have 2 components, CF(1) - the catalytic core - and CF(0) - the membrane proton channel. CF(1) has five subunits: alpha(3), beta(3), gamma(1), delta(1), epsilon(1). CF(0) has three main subunits: a, b and c.</text>
</comment>
<comment type="subcellular location">
    <subcellularLocation>
        <location evidence="1">Cellular thylakoid membrane</location>
        <topology evidence="1">Peripheral membrane protein</topology>
    </subcellularLocation>
</comment>
<comment type="similarity">
    <text evidence="1">Belongs to the ATPase gamma chain family.</text>
</comment>
<proteinExistence type="inferred from homology"/>
<organism>
    <name type="scientific">Acaryochloris marina (strain MBIC 11017)</name>
    <dbReference type="NCBI Taxonomy" id="329726"/>
    <lineage>
        <taxon>Bacteria</taxon>
        <taxon>Bacillati</taxon>
        <taxon>Cyanobacteriota</taxon>
        <taxon>Cyanophyceae</taxon>
        <taxon>Acaryochloridales</taxon>
        <taxon>Acaryochloridaceae</taxon>
        <taxon>Acaryochloris</taxon>
    </lineage>
</organism>
<feature type="chain" id="PRO_1000083771" description="ATP synthase gamma chain">
    <location>
        <begin position="1"/>
        <end position="317"/>
    </location>
</feature>
<reference key="1">
    <citation type="journal article" date="2008" name="Proc. Natl. Acad. Sci. U.S.A.">
        <title>Niche adaptation and genome expansion in the chlorophyll d-producing cyanobacterium Acaryochloris marina.</title>
        <authorList>
            <person name="Swingley W.D."/>
            <person name="Chen M."/>
            <person name="Cheung P.C."/>
            <person name="Conrad A.L."/>
            <person name="Dejesa L.C."/>
            <person name="Hao J."/>
            <person name="Honchak B.M."/>
            <person name="Karbach L.E."/>
            <person name="Kurdoglu A."/>
            <person name="Lahiri S."/>
            <person name="Mastrian S.D."/>
            <person name="Miyashita H."/>
            <person name="Page L."/>
            <person name="Ramakrishna P."/>
            <person name="Satoh S."/>
            <person name="Sattley W.M."/>
            <person name="Shimada Y."/>
            <person name="Taylor H.L."/>
            <person name="Tomo T."/>
            <person name="Tsuchiya T."/>
            <person name="Wang Z.T."/>
            <person name="Raymond J."/>
            <person name="Mimuro M."/>
            <person name="Blankenship R.E."/>
            <person name="Touchman J.W."/>
        </authorList>
    </citation>
    <scope>NUCLEOTIDE SEQUENCE [LARGE SCALE GENOMIC DNA]</scope>
    <source>
        <strain>MBIC 11017</strain>
    </source>
</reference>
<keyword id="KW-0066">ATP synthesis</keyword>
<keyword id="KW-0139">CF(1)</keyword>
<keyword id="KW-0375">Hydrogen ion transport</keyword>
<keyword id="KW-0406">Ion transport</keyword>
<keyword id="KW-0472">Membrane</keyword>
<keyword id="KW-1185">Reference proteome</keyword>
<keyword id="KW-0793">Thylakoid</keyword>
<keyword id="KW-0813">Transport</keyword>
<gene>
    <name evidence="1" type="primary">atpG</name>
    <name evidence="1" type="synonym">atpC</name>
    <name type="ordered locus">AM1_0897</name>
</gene>
<accession>B0BZL3</accession>